<protein>
    <recommendedName>
        <fullName evidence="1">CTP synthase</fullName>
        <ecNumber evidence="1">6.3.4.2</ecNumber>
    </recommendedName>
    <alternativeName>
        <fullName evidence="1">Cytidine 5'-triphosphate synthase</fullName>
    </alternativeName>
    <alternativeName>
        <fullName evidence="1">Cytidine triphosphate synthetase</fullName>
        <shortName evidence="1">CTP synthetase</shortName>
        <shortName evidence="1">CTPS</shortName>
    </alternativeName>
    <alternativeName>
        <fullName evidence="1">UTP--ammonia ligase</fullName>
    </alternativeName>
</protein>
<evidence type="ECO:0000255" key="1">
    <source>
        <dbReference type="HAMAP-Rule" id="MF_01227"/>
    </source>
</evidence>
<proteinExistence type="inferred from homology"/>
<comment type="function">
    <text evidence="1">Catalyzes the ATP-dependent amination of UTP to CTP with either L-glutamine or ammonia as the source of nitrogen. Regulates intracellular CTP levels through interactions with the four ribonucleotide triphosphates.</text>
</comment>
<comment type="catalytic activity">
    <reaction evidence="1">
        <text>UTP + L-glutamine + ATP + H2O = CTP + L-glutamate + ADP + phosphate + 2 H(+)</text>
        <dbReference type="Rhea" id="RHEA:26426"/>
        <dbReference type="ChEBI" id="CHEBI:15377"/>
        <dbReference type="ChEBI" id="CHEBI:15378"/>
        <dbReference type="ChEBI" id="CHEBI:29985"/>
        <dbReference type="ChEBI" id="CHEBI:30616"/>
        <dbReference type="ChEBI" id="CHEBI:37563"/>
        <dbReference type="ChEBI" id="CHEBI:43474"/>
        <dbReference type="ChEBI" id="CHEBI:46398"/>
        <dbReference type="ChEBI" id="CHEBI:58359"/>
        <dbReference type="ChEBI" id="CHEBI:456216"/>
        <dbReference type="EC" id="6.3.4.2"/>
    </reaction>
</comment>
<comment type="catalytic activity">
    <reaction evidence="1">
        <text>L-glutamine + H2O = L-glutamate + NH4(+)</text>
        <dbReference type="Rhea" id="RHEA:15889"/>
        <dbReference type="ChEBI" id="CHEBI:15377"/>
        <dbReference type="ChEBI" id="CHEBI:28938"/>
        <dbReference type="ChEBI" id="CHEBI:29985"/>
        <dbReference type="ChEBI" id="CHEBI:58359"/>
    </reaction>
</comment>
<comment type="catalytic activity">
    <reaction evidence="1">
        <text>UTP + NH4(+) + ATP = CTP + ADP + phosphate + 2 H(+)</text>
        <dbReference type="Rhea" id="RHEA:16597"/>
        <dbReference type="ChEBI" id="CHEBI:15378"/>
        <dbReference type="ChEBI" id="CHEBI:28938"/>
        <dbReference type="ChEBI" id="CHEBI:30616"/>
        <dbReference type="ChEBI" id="CHEBI:37563"/>
        <dbReference type="ChEBI" id="CHEBI:43474"/>
        <dbReference type="ChEBI" id="CHEBI:46398"/>
        <dbReference type="ChEBI" id="CHEBI:456216"/>
    </reaction>
</comment>
<comment type="activity regulation">
    <text evidence="1">Allosterically activated by GTP, when glutamine is the substrate; GTP has no effect on the reaction when ammonia is the substrate. The allosteric effector GTP functions by stabilizing the protein conformation that binds the tetrahedral intermediate(s) formed during glutamine hydrolysis. Inhibited by the product CTP, via allosteric rather than competitive inhibition.</text>
</comment>
<comment type="pathway">
    <text evidence="1">Pyrimidine metabolism; CTP biosynthesis via de novo pathway; CTP from UDP: step 2/2.</text>
</comment>
<comment type="subunit">
    <text evidence="1">Homotetramer.</text>
</comment>
<comment type="miscellaneous">
    <text evidence="1">CTPSs have evolved a hybrid strategy for distinguishing between UTP and CTP. The overlapping regions of the product feedback inhibitory and substrate sites recognize a common feature in both compounds, the triphosphate moiety. To differentiate isosteric substrate and product pyrimidine rings, an additional pocket far from the expected kinase/ligase catalytic site, specifically recognizes the cytosine and ribose portions of the product inhibitor.</text>
</comment>
<comment type="similarity">
    <text evidence="1">Belongs to the CTP synthase family.</text>
</comment>
<feature type="chain" id="PRO_1000139490" description="CTP synthase">
    <location>
        <begin position="1"/>
        <end position="546"/>
    </location>
</feature>
<feature type="domain" description="Glutamine amidotransferase type-1" evidence="1">
    <location>
        <begin position="298"/>
        <end position="534"/>
    </location>
</feature>
<feature type="region of interest" description="Amidoligase domain" evidence="1">
    <location>
        <begin position="1"/>
        <end position="264"/>
    </location>
</feature>
<feature type="active site" description="Nucleophile; for glutamine hydrolysis" evidence="1">
    <location>
        <position position="384"/>
    </location>
</feature>
<feature type="active site" evidence="1">
    <location>
        <position position="507"/>
    </location>
</feature>
<feature type="active site" evidence="1">
    <location>
        <position position="509"/>
    </location>
</feature>
<feature type="binding site" evidence="1">
    <location>
        <position position="12"/>
    </location>
    <ligand>
        <name>CTP</name>
        <dbReference type="ChEBI" id="CHEBI:37563"/>
        <note>allosteric inhibitor</note>
    </ligand>
</feature>
<feature type="binding site" evidence="1">
    <location>
        <position position="12"/>
    </location>
    <ligand>
        <name>UTP</name>
        <dbReference type="ChEBI" id="CHEBI:46398"/>
    </ligand>
</feature>
<feature type="binding site" evidence="1">
    <location>
        <begin position="13"/>
        <end position="18"/>
    </location>
    <ligand>
        <name>ATP</name>
        <dbReference type="ChEBI" id="CHEBI:30616"/>
    </ligand>
</feature>
<feature type="binding site" evidence="1">
    <location>
        <position position="70"/>
    </location>
    <ligand>
        <name>ATP</name>
        <dbReference type="ChEBI" id="CHEBI:30616"/>
    </ligand>
</feature>
<feature type="binding site" evidence="1">
    <location>
        <position position="70"/>
    </location>
    <ligand>
        <name>Mg(2+)</name>
        <dbReference type="ChEBI" id="CHEBI:18420"/>
    </ligand>
</feature>
<feature type="binding site" evidence="1">
    <location>
        <position position="140"/>
    </location>
    <ligand>
        <name>Mg(2+)</name>
        <dbReference type="ChEBI" id="CHEBI:18420"/>
    </ligand>
</feature>
<feature type="binding site" evidence="1">
    <location>
        <begin position="147"/>
        <end position="149"/>
    </location>
    <ligand>
        <name>CTP</name>
        <dbReference type="ChEBI" id="CHEBI:37563"/>
        <note>allosteric inhibitor</note>
    </ligand>
</feature>
<feature type="binding site" evidence="1">
    <location>
        <begin position="185"/>
        <end position="190"/>
    </location>
    <ligand>
        <name>CTP</name>
        <dbReference type="ChEBI" id="CHEBI:37563"/>
        <note>allosteric inhibitor</note>
    </ligand>
</feature>
<feature type="binding site" evidence="1">
    <location>
        <begin position="185"/>
        <end position="190"/>
    </location>
    <ligand>
        <name>UTP</name>
        <dbReference type="ChEBI" id="CHEBI:46398"/>
    </ligand>
</feature>
<feature type="binding site" evidence="1">
    <location>
        <position position="221"/>
    </location>
    <ligand>
        <name>CTP</name>
        <dbReference type="ChEBI" id="CHEBI:37563"/>
        <note>allosteric inhibitor</note>
    </ligand>
</feature>
<feature type="binding site" evidence="1">
    <location>
        <position position="221"/>
    </location>
    <ligand>
        <name>UTP</name>
        <dbReference type="ChEBI" id="CHEBI:46398"/>
    </ligand>
</feature>
<feature type="binding site" evidence="1">
    <location>
        <position position="357"/>
    </location>
    <ligand>
        <name>L-glutamine</name>
        <dbReference type="ChEBI" id="CHEBI:58359"/>
    </ligand>
</feature>
<feature type="binding site" evidence="1">
    <location>
        <begin position="385"/>
        <end position="388"/>
    </location>
    <ligand>
        <name>L-glutamine</name>
        <dbReference type="ChEBI" id="CHEBI:58359"/>
    </ligand>
</feature>
<feature type="binding site" evidence="1">
    <location>
        <position position="408"/>
    </location>
    <ligand>
        <name>L-glutamine</name>
        <dbReference type="ChEBI" id="CHEBI:58359"/>
    </ligand>
</feature>
<feature type="binding site" evidence="1">
    <location>
        <position position="464"/>
    </location>
    <ligand>
        <name>L-glutamine</name>
        <dbReference type="ChEBI" id="CHEBI:58359"/>
    </ligand>
</feature>
<gene>
    <name evidence="1" type="primary">pyrG</name>
    <name type="ordered locus">Mthe_0862</name>
</gene>
<accession>A0B7H6</accession>
<dbReference type="EC" id="6.3.4.2" evidence="1"/>
<dbReference type="EMBL" id="CP000477">
    <property type="protein sequence ID" value="ABK14650.1"/>
    <property type="molecule type" value="Genomic_DNA"/>
</dbReference>
<dbReference type="RefSeq" id="WP_011696045.1">
    <property type="nucleotide sequence ID" value="NC_008553.1"/>
</dbReference>
<dbReference type="SMR" id="A0B7H6"/>
<dbReference type="STRING" id="349307.Mthe_0862"/>
<dbReference type="MEROPS" id="C26.964"/>
<dbReference type="GeneID" id="4462326"/>
<dbReference type="KEGG" id="mtp:Mthe_0862"/>
<dbReference type="HOGENOM" id="CLU_011675_5_0_2"/>
<dbReference type="UniPathway" id="UPA00159">
    <property type="reaction ID" value="UER00277"/>
</dbReference>
<dbReference type="Proteomes" id="UP000000674">
    <property type="component" value="Chromosome"/>
</dbReference>
<dbReference type="GO" id="GO:0005524">
    <property type="term" value="F:ATP binding"/>
    <property type="evidence" value="ECO:0007669"/>
    <property type="project" value="UniProtKB-KW"/>
</dbReference>
<dbReference type="GO" id="GO:0003883">
    <property type="term" value="F:CTP synthase activity"/>
    <property type="evidence" value="ECO:0007669"/>
    <property type="project" value="UniProtKB-UniRule"/>
</dbReference>
<dbReference type="GO" id="GO:0004359">
    <property type="term" value="F:glutaminase activity"/>
    <property type="evidence" value="ECO:0007669"/>
    <property type="project" value="RHEA"/>
</dbReference>
<dbReference type="GO" id="GO:0042802">
    <property type="term" value="F:identical protein binding"/>
    <property type="evidence" value="ECO:0007669"/>
    <property type="project" value="TreeGrafter"/>
</dbReference>
<dbReference type="GO" id="GO:0046872">
    <property type="term" value="F:metal ion binding"/>
    <property type="evidence" value="ECO:0007669"/>
    <property type="project" value="UniProtKB-KW"/>
</dbReference>
<dbReference type="GO" id="GO:0044210">
    <property type="term" value="P:'de novo' CTP biosynthetic process"/>
    <property type="evidence" value="ECO:0007669"/>
    <property type="project" value="UniProtKB-UniRule"/>
</dbReference>
<dbReference type="GO" id="GO:0019856">
    <property type="term" value="P:pyrimidine nucleobase biosynthetic process"/>
    <property type="evidence" value="ECO:0007669"/>
    <property type="project" value="TreeGrafter"/>
</dbReference>
<dbReference type="CDD" id="cd03113">
    <property type="entry name" value="CTPS_N"/>
    <property type="match status" value="1"/>
</dbReference>
<dbReference type="CDD" id="cd01746">
    <property type="entry name" value="GATase1_CTP_Synthase"/>
    <property type="match status" value="1"/>
</dbReference>
<dbReference type="FunFam" id="3.40.50.300:FF:000009">
    <property type="entry name" value="CTP synthase"/>
    <property type="match status" value="1"/>
</dbReference>
<dbReference type="FunFam" id="3.40.50.880:FF:000002">
    <property type="entry name" value="CTP synthase"/>
    <property type="match status" value="1"/>
</dbReference>
<dbReference type="Gene3D" id="3.40.50.880">
    <property type="match status" value="1"/>
</dbReference>
<dbReference type="Gene3D" id="3.40.50.300">
    <property type="entry name" value="P-loop containing nucleotide triphosphate hydrolases"/>
    <property type="match status" value="1"/>
</dbReference>
<dbReference type="HAMAP" id="MF_01227">
    <property type="entry name" value="PyrG"/>
    <property type="match status" value="1"/>
</dbReference>
<dbReference type="InterPro" id="IPR029062">
    <property type="entry name" value="Class_I_gatase-like"/>
</dbReference>
<dbReference type="InterPro" id="IPR004468">
    <property type="entry name" value="CTP_synthase"/>
</dbReference>
<dbReference type="InterPro" id="IPR017456">
    <property type="entry name" value="CTP_synthase_N"/>
</dbReference>
<dbReference type="InterPro" id="IPR017926">
    <property type="entry name" value="GATASE"/>
</dbReference>
<dbReference type="InterPro" id="IPR033828">
    <property type="entry name" value="GATase1_CTP_Synthase"/>
</dbReference>
<dbReference type="InterPro" id="IPR027417">
    <property type="entry name" value="P-loop_NTPase"/>
</dbReference>
<dbReference type="NCBIfam" id="NF003792">
    <property type="entry name" value="PRK05380.1"/>
    <property type="match status" value="1"/>
</dbReference>
<dbReference type="NCBIfam" id="TIGR00337">
    <property type="entry name" value="PyrG"/>
    <property type="match status" value="1"/>
</dbReference>
<dbReference type="PANTHER" id="PTHR11550">
    <property type="entry name" value="CTP SYNTHASE"/>
    <property type="match status" value="1"/>
</dbReference>
<dbReference type="PANTHER" id="PTHR11550:SF0">
    <property type="entry name" value="CTP SYNTHASE-RELATED"/>
    <property type="match status" value="1"/>
</dbReference>
<dbReference type="Pfam" id="PF06418">
    <property type="entry name" value="CTP_synth_N"/>
    <property type="match status" value="1"/>
</dbReference>
<dbReference type="Pfam" id="PF00117">
    <property type="entry name" value="GATase"/>
    <property type="match status" value="1"/>
</dbReference>
<dbReference type="SUPFAM" id="SSF52317">
    <property type="entry name" value="Class I glutamine amidotransferase-like"/>
    <property type="match status" value="1"/>
</dbReference>
<dbReference type="SUPFAM" id="SSF52540">
    <property type="entry name" value="P-loop containing nucleoside triphosphate hydrolases"/>
    <property type="match status" value="1"/>
</dbReference>
<dbReference type="PROSITE" id="PS51273">
    <property type="entry name" value="GATASE_TYPE_1"/>
    <property type="match status" value="1"/>
</dbReference>
<organism>
    <name type="scientific">Methanothrix thermoacetophila (strain DSM 6194 / JCM 14653 / NBRC 101360 / PT)</name>
    <name type="common">Methanosaeta thermophila</name>
    <dbReference type="NCBI Taxonomy" id="349307"/>
    <lineage>
        <taxon>Archaea</taxon>
        <taxon>Methanobacteriati</taxon>
        <taxon>Methanobacteriota</taxon>
        <taxon>Stenosarchaea group</taxon>
        <taxon>Methanomicrobia</taxon>
        <taxon>Methanotrichales</taxon>
        <taxon>Methanotrichaceae</taxon>
        <taxon>Methanothrix</taxon>
    </lineage>
</organism>
<sequence>MRYIVVTGGVMSGLGKGITAASIGRLLMNKGYRVTAIKIDPYINIDAGLMSPFQHGEVYVLKDGGEVDLDLGNYERFLDIELTRDHNITTGKVYSTVIEKERRGEYLGKTVQIIPHITDEIKRRIRQVSRTGGSEICLIEVGGTVGDIESMPFLEAMRQLKYEESGNIFFVHVTLAPMTSDGEQKTKPTQHSVKEMRELGLQPDMIVVRCKKPLLPETKAKIAHFCDVPIEAVISGHDSDDIYRVPLQLEAEGLTKYIMKAMRLFPLEERRDWYDLVQRMDSIREKVSMALVGKYTSGSQCTDPMKDAYLSIREALKHAGIEAGVMPEISWIDAEDLERIQPEKVLRDFDGILVPGGFGARGTEGKMNAIRYAREKGIPYLGICFGMQLAVIEFARNVCGLEGASSTEFGETPHPVIALLPEQEKVRQMGATMRLGNYPAHLIEGTLAHRIYGTTEIVERHRHRYEVNPAYIEVLEKNGLLFSGRNGDLMEIMEIPGHPFFFACQFHPEMRSRPGRPSPPFLAFVEAMKAQRLRRTGSTYTLELTA</sequence>
<keyword id="KW-0067">ATP-binding</keyword>
<keyword id="KW-0315">Glutamine amidotransferase</keyword>
<keyword id="KW-0436">Ligase</keyword>
<keyword id="KW-0460">Magnesium</keyword>
<keyword id="KW-0479">Metal-binding</keyword>
<keyword id="KW-0547">Nucleotide-binding</keyword>
<keyword id="KW-0665">Pyrimidine biosynthesis</keyword>
<keyword id="KW-1185">Reference proteome</keyword>
<name>PYRG_METTP</name>
<reference key="1">
    <citation type="submission" date="2006-10" db="EMBL/GenBank/DDBJ databases">
        <title>Complete sequence of Methanosaeta thermophila PT.</title>
        <authorList>
            <consortium name="US DOE Joint Genome Institute"/>
            <person name="Copeland A."/>
            <person name="Lucas S."/>
            <person name="Lapidus A."/>
            <person name="Barry K."/>
            <person name="Detter J.C."/>
            <person name="Glavina del Rio T."/>
            <person name="Hammon N."/>
            <person name="Israni S."/>
            <person name="Pitluck S."/>
            <person name="Chain P."/>
            <person name="Malfatti S."/>
            <person name="Shin M."/>
            <person name="Vergez L."/>
            <person name="Schmutz J."/>
            <person name="Larimer F."/>
            <person name="Land M."/>
            <person name="Hauser L."/>
            <person name="Kyrpides N."/>
            <person name="Kim E."/>
            <person name="Smith K.S."/>
            <person name="Ingram-Smith C."/>
            <person name="Richardson P."/>
        </authorList>
    </citation>
    <scope>NUCLEOTIDE SEQUENCE [LARGE SCALE GENOMIC DNA]</scope>
    <source>
        <strain>DSM 6194 / JCM 14653 / NBRC 101360 / PT</strain>
    </source>
</reference>